<organism>
    <name type="scientific">Synechocystis sp. (strain ATCC 27184 / PCC 6803 / Kazusa)</name>
    <dbReference type="NCBI Taxonomy" id="1111708"/>
    <lineage>
        <taxon>Bacteria</taxon>
        <taxon>Bacillati</taxon>
        <taxon>Cyanobacteriota</taxon>
        <taxon>Cyanophyceae</taxon>
        <taxon>Synechococcales</taxon>
        <taxon>Merismopediaceae</taxon>
        <taxon>Synechocystis</taxon>
    </lineage>
</organism>
<dbReference type="EMBL" id="Y07532">
    <property type="protein sequence ID" value="CAA68819.1"/>
    <property type="molecule type" value="Genomic_DNA"/>
</dbReference>
<dbReference type="EMBL" id="X58128">
    <property type="protein sequence ID" value="CAA41136.1"/>
    <property type="molecule type" value="Genomic_DNA"/>
</dbReference>
<dbReference type="EMBL" id="BA000022">
    <property type="protein sequence ID" value="BAA16734.1"/>
    <property type="molecule type" value="Genomic_DNA"/>
</dbReference>
<dbReference type="SMR" id="P17253"/>
<dbReference type="FunCoup" id="P17253">
    <property type="interactions" value="466"/>
</dbReference>
<dbReference type="IntAct" id="P17253">
    <property type="interactions" value="2"/>
</dbReference>
<dbReference type="STRING" id="1148.gene:10497589"/>
<dbReference type="PaxDb" id="1148-1651807"/>
<dbReference type="EnsemblBacteria" id="BAA16734">
    <property type="protein sequence ID" value="BAA16734"/>
    <property type="gene ID" value="BAA16734"/>
</dbReference>
<dbReference type="KEGG" id="syn:sll1327"/>
<dbReference type="eggNOG" id="COG0224">
    <property type="taxonomic scope" value="Bacteria"/>
</dbReference>
<dbReference type="InParanoid" id="P17253"/>
<dbReference type="PhylomeDB" id="P17253"/>
<dbReference type="Proteomes" id="UP000001425">
    <property type="component" value="Chromosome"/>
</dbReference>
<dbReference type="GO" id="GO:0005886">
    <property type="term" value="C:plasma membrane"/>
    <property type="evidence" value="ECO:0000314"/>
    <property type="project" value="UniProtKB"/>
</dbReference>
<dbReference type="GO" id="GO:0031676">
    <property type="term" value="C:plasma membrane-derived thylakoid membrane"/>
    <property type="evidence" value="ECO:0007669"/>
    <property type="project" value="UniProtKB-SubCell"/>
</dbReference>
<dbReference type="GO" id="GO:0045259">
    <property type="term" value="C:proton-transporting ATP synthase complex"/>
    <property type="evidence" value="ECO:0000314"/>
    <property type="project" value="UniProtKB"/>
</dbReference>
<dbReference type="GO" id="GO:0005524">
    <property type="term" value="F:ATP binding"/>
    <property type="evidence" value="ECO:0007669"/>
    <property type="project" value="UniProtKB-UniRule"/>
</dbReference>
<dbReference type="GO" id="GO:0046933">
    <property type="term" value="F:proton-transporting ATP synthase activity, rotational mechanism"/>
    <property type="evidence" value="ECO:0007669"/>
    <property type="project" value="UniProtKB-UniRule"/>
</dbReference>
<dbReference type="GO" id="GO:0015986">
    <property type="term" value="P:proton motive force-driven ATP synthesis"/>
    <property type="evidence" value="ECO:0000318"/>
    <property type="project" value="GO_Central"/>
</dbReference>
<dbReference type="CDD" id="cd12151">
    <property type="entry name" value="F1-ATPase_gamma"/>
    <property type="match status" value="1"/>
</dbReference>
<dbReference type="FunFam" id="3.40.1380.10:FF:000006">
    <property type="entry name" value="ATP synthase gamma chain"/>
    <property type="match status" value="1"/>
</dbReference>
<dbReference type="FunFam" id="1.10.287.80:FF:000003">
    <property type="entry name" value="ATP synthase gamma chain, chloroplastic"/>
    <property type="match status" value="1"/>
</dbReference>
<dbReference type="FunFam" id="1.10.287.80:FF:000004">
    <property type="entry name" value="ATP synthase gamma chain, chloroplastic"/>
    <property type="match status" value="1"/>
</dbReference>
<dbReference type="Gene3D" id="3.40.1380.10">
    <property type="match status" value="1"/>
</dbReference>
<dbReference type="Gene3D" id="1.10.287.80">
    <property type="entry name" value="ATP synthase, gamma subunit, helix hairpin domain"/>
    <property type="match status" value="2"/>
</dbReference>
<dbReference type="HAMAP" id="MF_00815">
    <property type="entry name" value="ATP_synth_gamma_bact"/>
    <property type="match status" value="1"/>
</dbReference>
<dbReference type="InterPro" id="IPR035968">
    <property type="entry name" value="ATP_synth_F1_ATPase_gsu"/>
</dbReference>
<dbReference type="InterPro" id="IPR000131">
    <property type="entry name" value="ATP_synth_F1_gsu"/>
</dbReference>
<dbReference type="InterPro" id="IPR023632">
    <property type="entry name" value="ATP_synth_F1_gsu_CS"/>
</dbReference>
<dbReference type="NCBIfam" id="TIGR01146">
    <property type="entry name" value="ATPsyn_F1gamma"/>
    <property type="match status" value="1"/>
</dbReference>
<dbReference type="NCBIfam" id="NF004145">
    <property type="entry name" value="PRK05621.1-2"/>
    <property type="match status" value="1"/>
</dbReference>
<dbReference type="PANTHER" id="PTHR11693">
    <property type="entry name" value="ATP SYNTHASE GAMMA CHAIN"/>
    <property type="match status" value="1"/>
</dbReference>
<dbReference type="PANTHER" id="PTHR11693:SF41">
    <property type="entry name" value="ATP SYNTHASE GAMMA CHAIN, CHLOROPLASTIC"/>
    <property type="match status" value="1"/>
</dbReference>
<dbReference type="Pfam" id="PF00231">
    <property type="entry name" value="ATP-synt"/>
    <property type="match status" value="1"/>
</dbReference>
<dbReference type="PRINTS" id="PR00126">
    <property type="entry name" value="ATPASEGAMMA"/>
</dbReference>
<dbReference type="SUPFAM" id="SSF52943">
    <property type="entry name" value="ATP synthase (F1-ATPase), gamma subunit"/>
    <property type="match status" value="1"/>
</dbReference>
<dbReference type="PROSITE" id="PS00153">
    <property type="entry name" value="ATPASE_GAMMA"/>
    <property type="match status" value="1"/>
</dbReference>
<comment type="function">
    <text>Produces ATP from ADP in the presence of a proton gradient across the membrane. The gamma chain is believed to be important in regulating ATPase activity and the flow of protons through the CF(0) complex.</text>
</comment>
<comment type="subunit">
    <text>F-type ATPases have 2 components, CF(1) - the catalytic core - and CF(0) - the membrane proton channel. CF(1) has five subunits: alpha(3), beta(3), gamma(1), delta(1), epsilon(1). CF(0) has three main subunits: a, b and c.</text>
</comment>
<comment type="subcellular location">
    <subcellularLocation>
        <location evidence="1">Cellular thylakoid membrane</location>
        <topology evidence="1">Peripheral membrane protein</topology>
    </subcellularLocation>
</comment>
<comment type="similarity">
    <text evidence="1">Belongs to the ATPase gamma chain family.</text>
</comment>
<sequence>MPNLKAIRDRIQSVKNTKKITEAMRLVAAAKVRRAQEQVLSTRPFADALAQVLYNLQNRLSFAETELPLFEQREPKAVALLVVTGDRGLCGGYNVNAIKRAEQRAKELKNQGIAVKLVLVGSKAKQYFGRRDYDVAASYANLEQIPNASEAAQIADSLVALFVSETVDRVELIYTRFVSLISSQPVVQTLFPLSPQGLEAPDDEIFRLITRGGKFQVEREKVEAPVESFPQDMIFEQDPVQILEALLPLYNTNQLLRALQESAASELAARMTAMSNASDNAGQLIGTLTLSYNKARQAAITQELLEVVAGANSL</sequence>
<name>ATPG_SYNY3</name>
<protein>
    <recommendedName>
        <fullName evidence="1">ATP synthase gamma chain</fullName>
    </recommendedName>
    <alternativeName>
        <fullName evidence="1">ATP synthase F1 sector gamma subunit</fullName>
    </alternativeName>
    <alternativeName>
        <fullName evidence="1">F-ATPase gamma subunit</fullName>
    </alternativeName>
</protein>
<proteinExistence type="inferred from homology"/>
<keyword id="KW-0066">ATP synthesis</keyword>
<keyword id="KW-0139">CF(1)</keyword>
<keyword id="KW-0375">Hydrogen ion transport</keyword>
<keyword id="KW-0406">Ion transport</keyword>
<keyword id="KW-0472">Membrane</keyword>
<keyword id="KW-1185">Reference proteome</keyword>
<keyword id="KW-0793">Thylakoid</keyword>
<keyword id="KW-0813">Transport</keyword>
<accession>P17253</accession>
<reference key="1">
    <citation type="journal article" date="1990" name="FEBS Lett.">
        <title>The primary structure of the gamma-subunit of the ATPase from Synechocystis 6803.</title>
        <authorList>
            <person name="Werner S."/>
            <person name="Schumann J."/>
            <person name="Strotmann H."/>
        </authorList>
    </citation>
    <scope>NUCLEOTIDE SEQUENCE [GENOMIC DNA]</scope>
</reference>
<reference key="2">
    <citation type="journal article" date="1991" name="Plant Mol. Biol.">
        <title>The atp1 and atp2 operons of the cyanobacterium Synechocystis sp. PCC 6803.</title>
        <authorList>
            <person name="Lill H."/>
            <person name="Nelson N."/>
        </authorList>
    </citation>
    <scope>NUCLEOTIDE SEQUENCE [GENOMIC DNA]</scope>
</reference>
<reference key="3">
    <citation type="journal article" date="1996" name="DNA Res.">
        <title>Sequence analysis of the genome of the unicellular cyanobacterium Synechocystis sp. strain PCC6803. II. Sequence determination of the entire genome and assignment of potential protein-coding regions.</title>
        <authorList>
            <person name="Kaneko T."/>
            <person name="Sato S."/>
            <person name="Kotani H."/>
            <person name="Tanaka A."/>
            <person name="Asamizu E."/>
            <person name="Nakamura Y."/>
            <person name="Miyajima N."/>
            <person name="Hirosawa M."/>
            <person name="Sugiura M."/>
            <person name="Sasamoto S."/>
            <person name="Kimura T."/>
            <person name="Hosouchi T."/>
            <person name="Matsuno A."/>
            <person name="Muraki A."/>
            <person name="Nakazaki N."/>
            <person name="Naruo K."/>
            <person name="Okumura S."/>
            <person name="Shimpo S."/>
            <person name="Takeuchi C."/>
            <person name="Wada T."/>
            <person name="Watanabe A."/>
            <person name="Yamada M."/>
            <person name="Yasuda M."/>
            <person name="Tabata S."/>
        </authorList>
    </citation>
    <scope>NUCLEOTIDE SEQUENCE [LARGE SCALE GENOMIC DNA]</scope>
    <source>
        <strain>ATCC 27184 / PCC 6803 / Kazusa</strain>
    </source>
</reference>
<feature type="chain" id="PRO_0000073406" description="ATP synthase gamma chain">
    <location>
        <begin position="1"/>
        <end position="314"/>
    </location>
</feature>
<gene>
    <name evidence="1" type="primary">atpG</name>
    <name evidence="1" type="synonym">atpC</name>
    <name type="ordered locus">sll1327</name>
</gene>
<evidence type="ECO:0000255" key="1">
    <source>
        <dbReference type="HAMAP-Rule" id="MF_00815"/>
    </source>
</evidence>